<gene>
    <name type="primary">Wdr7</name>
    <name type="synonym">Trag</name>
</gene>
<reference key="1">
    <citation type="submission" date="2000-09" db="EMBL/GenBank/DDBJ databases">
        <title>TRAG: a novel gene associated with TGF-beta resistance.</title>
        <authorList>
            <person name="Sanders S."/>
            <person name="Thorgeirsson S.S."/>
        </authorList>
    </citation>
    <scope>NUCLEOTIDE SEQUENCE [MRNA] (ISOFORMS 1 AND 2)</scope>
    <source>
        <tissue>Brain</tissue>
    </source>
</reference>
<reference key="2">
    <citation type="journal article" date="2012" name="Nat. Commun.">
        <title>Quantitative maps of protein phosphorylation sites across 14 different rat organs and tissues.</title>
        <authorList>
            <person name="Lundby A."/>
            <person name="Secher A."/>
            <person name="Lage K."/>
            <person name="Nordsborg N.B."/>
            <person name="Dmytriyev A."/>
            <person name="Lundby C."/>
            <person name="Olsen J.V."/>
        </authorList>
    </citation>
    <scope>IDENTIFICATION BY MASS SPECTROMETRY [LARGE SCALE ANALYSIS]</scope>
</reference>
<protein>
    <recommendedName>
        <fullName>WD repeat-containing protein 7</fullName>
    </recommendedName>
    <alternativeName>
        <fullName>TGF-beta resistance-associated protein TRAG</fullName>
    </alternativeName>
</protein>
<accession>Q9ERH3</accession>
<accession>Q920I8</accession>
<name>WDR7_RAT</name>
<feature type="chain" id="PRO_0000051355" description="WD repeat-containing protein 7">
    <location>
        <begin position="1"/>
        <end position="1488"/>
    </location>
</feature>
<feature type="repeat" description="WD 1">
    <location>
        <begin position="17"/>
        <end position="56"/>
    </location>
</feature>
<feature type="repeat" description="WD 2">
    <location>
        <begin position="62"/>
        <end position="104"/>
    </location>
</feature>
<feature type="repeat" description="WD 3">
    <location>
        <begin position="156"/>
        <end position="199"/>
    </location>
</feature>
<feature type="repeat" description="WD 4">
    <location>
        <begin position="324"/>
        <end position="366"/>
    </location>
</feature>
<feature type="repeat" description="WD 5">
    <location>
        <begin position="404"/>
        <end position="443"/>
    </location>
</feature>
<feature type="repeat" description="WD 6">
    <location>
        <begin position="462"/>
        <end position="507"/>
    </location>
</feature>
<feature type="repeat" description="WD 7">
    <location>
        <begin position="558"/>
        <end position="597"/>
    </location>
</feature>
<feature type="repeat" description="WD 8">
    <location>
        <begin position="1349"/>
        <end position="1388"/>
    </location>
</feature>
<feature type="repeat" description="WD 9">
    <location>
        <begin position="1390"/>
        <end position="1430"/>
    </location>
</feature>
<feature type="region of interest" description="Disordered" evidence="2">
    <location>
        <begin position="761"/>
        <end position="781"/>
    </location>
</feature>
<feature type="region of interest" description="Disordered" evidence="2">
    <location>
        <begin position="911"/>
        <end position="947"/>
    </location>
</feature>
<feature type="compositionally biased region" description="Basic and acidic residues" evidence="2">
    <location>
        <begin position="768"/>
        <end position="781"/>
    </location>
</feature>
<feature type="compositionally biased region" description="Polar residues" evidence="2">
    <location>
        <begin position="937"/>
        <end position="947"/>
    </location>
</feature>
<feature type="modified residue" description="Phosphoserine" evidence="1">
    <location>
        <position position="935"/>
    </location>
</feature>
<feature type="modified residue" description="Phosphoserine" evidence="1">
    <location>
        <position position="1454"/>
    </location>
</feature>
<feature type="splice variant" id="VSP_015276" description="In isoform 2." evidence="3">
    <location>
        <begin position="950"/>
        <end position="980"/>
    </location>
</feature>
<comment type="alternative products">
    <event type="alternative splicing"/>
    <isoform>
        <id>Q9ERH3-1</id>
        <name>1</name>
        <sequence type="displayed"/>
    </isoform>
    <isoform>
        <id>Q9ERH3-2</id>
        <name>2</name>
        <sequence type="described" ref="VSP_015276"/>
    </isoform>
</comment>
<proteinExistence type="evidence at protein level"/>
<dbReference type="EMBL" id="AF192379">
    <property type="protein sequence ID" value="AAL03984.1"/>
    <property type="molecule type" value="mRNA"/>
</dbReference>
<dbReference type="EMBL" id="AF305813">
    <property type="protein sequence ID" value="AAG31140.1"/>
    <property type="molecule type" value="mRNA"/>
</dbReference>
<dbReference type="RefSeq" id="NP_001382007.1">
    <molecule id="Q9ERH3-2"/>
    <property type="nucleotide sequence ID" value="NM_001395078.1"/>
</dbReference>
<dbReference type="RefSeq" id="NP_076465.1">
    <molecule id="Q9ERH3-1"/>
    <property type="nucleotide sequence ID" value="NM_023975.2"/>
</dbReference>
<dbReference type="RefSeq" id="XP_008770393.1">
    <property type="nucleotide sequence ID" value="XM_008772171.2"/>
</dbReference>
<dbReference type="RefSeq" id="XP_017456520.1">
    <property type="nucleotide sequence ID" value="XM_017601031.1"/>
</dbReference>
<dbReference type="RefSeq" id="XP_063133638.1">
    <molecule id="Q9ERH3-1"/>
    <property type="nucleotide sequence ID" value="XM_063277568.1"/>
</dbReference>
<dbReference type="RefSeq" id="XP_063133639.1">
    <molecule id="Q9ERH3-2"/>
    <property type="nucleotide sequence ID" value="XM_063277569.1"/>
</dbReference>
<dbReference type="BioGRID" id="249358">
    <property type="interactions" value="4"/>
</dbReference>
<dbReference type="FunCoup" id="Q9ERH3">
    <property type="interactions" value="4373"/>
</dbReference>
<dbReference type="IntAct" id="Q9ERH3">
    <property type="interactions" value="2"/>
</dbReference>
<dbReference type="MINT" id="Q9ERH3"/>
<dbReference type="STRING" id="10116.ENSRNOP00000025325"/>
<dbReference type="CarbonylDB" id="Q9ERH3"/>
<dbReference type="iPTMnet" id="Q9ERH3"/>
<dbReference type="PhosphoSitePlus" id="Q9ERH3"/>
<dbReference type="SwissPalm" id="Q9ERH3"/>
<dbReference type="jPOST" id="Q9ERH3"/>
<dbReference type="PaxDb" id="10116-ENSRNOP00000025325"/>
<dbReference type="Ensembl" id="ENSRNOT00000025325.4">
    <molecule id="Q9ERH3-1"/>
    <property type="protein sequence ID" value="ENSRNOP00000025325.3"/>
    <property type="gene ID" value="ENSRNOG00000018387.5"/>
</dbReference>
<dbReference type="Ensembl" id="ENSRNOT00000110066.1">
    <molecule id="Q9ERH3-2"/>
    <property type="protein sequence ID" value="ENSRNOP00000082010.1"/>
    <property type="gene ID" value="ENSRNOG00000018387.5"/>
</dbReference>
<dbReference type="GeneID" id="66031"/>
<dbReference type="KEGG" id="rno:66031"/>
<dbReference type="UCSC" id="RGD:619836">
    <molecule id="Q9ERH3-1"/>
    <property type="organism name" value="rat"/>
</dbReference>
<dbReference type="AGR" id="RGD:619836"/>
<dbReference type="CTD" id="23335"/>
<dbReference type="RGD" id="619836">
    <property type="gene designation" value="Wdr7"/>
</dbReference>
<dbReference type="eggNOG" id="KOG4155">
    <property type="taxonomic scope" value="Eukaryota"/>
</dbReference>
<dbReference type="GeneTree" id="ENSGT00940000155301"/>
<dbReference type="HOGENOM" id="CLU_004362_1_0_1"/>
<dbReference type="InParanoid" id="Q9ERH3"/>
<dbReference type="OMA" id="KQMPPRI"/>
<dbReference type="OrthoDB" id="338622at2759"/>
<dbReference type="PhylomeDB" id="Q9ERH3"/>
<dbReference type="TreeFam" id="TF313196"/>
<dbReference type="PRO" id="PR:Q9ERH3"/>
<dbReference type="Proteomes" id="UP000002494">
    <property type="component" value="Chromosome 18"/>
</dbReference>
<dbReference type="Bgee" id="ENSRNOG00000018387">
    <property type="expression patterns" value="Expressed in Ammon's horn and 19 other cell types or tissues"/>
</dbReference>
<dbReference type="GO" id="GO:0005737">
    <property type="term" value="C:cytoplasm"/>
    <property type="evidence" value="ECO:0000318"/>
    <property type="project" value="GO_Central"/>
</dbReference>
<dbReference type="GO" id="GO:0008021">
    <property type="term" value="C:synaptic vesicle"/>
    <property type="evidence" value="ECO:0000314"/>
    <property type="project" value="RGD"/>
</dbReference>
<dbReference type="GO" id="GO:0002244">
    <property type="term" value="P:hematopoietic progenitor cell differentiation"/>
    <property type="evidence" value="ECO:0000266"/>
    <property type="project" value="RGD"/>
</dbReference>
<dbReference type="FunFam" id="2.130.10.10:FF:000432">
    <property type="entry name" value="WD repeat domain 7"/>
    <property type="match status" value="1"/>
</dbReference>
<dbReference type="FunFam" id="2.130.10.10:FF:000247">
    <property type="entry name" value="WD repeat-containing protein 72"/>
    <property type="match status" value="1"/>
</dbReference>
<dbReference type="Gene3D" id="2.130.10.10">
    <property type="entry name" value="YVTN repeat-like/Quinoprotein amine dehydrogenase"/>
    <property type="match status" value="3"/>
</dbReference>
<dbReference type="InterPro" id="IPR011047">
    <property type="entry name" value="Quinoprotein_ADH-like_sf"/>
</dbReference>
<dbReference type="InterPro" id="IPR015943">
    <property type="entry name" value="WD40/YVTN_repeat-like_dom_sf"/>
</dbReference>
<dbReference type="InterPro" id="IPR019775">
    <property type="entry name" value="WD40_repeat_CS"/>
</dbReference>
<dbReference type="InterPro" id="IPR036322">
    <property type="entry name" value="WD40_repeat_dom_sf"/>
</dbReference>
<dbReference type="InterPro" id="IPR001680">
    <property type="entry name" value="WD40_rpt"/>
</dbReference>
<dbReference type="InterPro" id="IPR049916">
    <property type="entry name" value="WDR7/72"/>
</dbReference>
<dbReference type="PANTHER" id="PTHR44099">
    <property type="entry name" value="RABCONNECTIN-3B, ISOFORM A"/>
    <property type="match status" value="1"/>
</dbReference>
<dbReference type="PANTHER" id="PTHR44099:SF3">
    <property type="entry name" value="WD REPEAT-CONTAINING PROTEIN 7"/>
    <property type="match status" value="1"/>
</dbReference>
<dbReference type="Pfam" id="PF00400">
    <property type="entry name" value="WD40"/>
    <property type="match status" value="5"/>
</dbReference>
<dbReference type="Pfam" id="PF23123">
    <property type="entry name" value="WDR72_alpha-sol"/>
    <property type="match status" value="1"/>
</dbReference>
<dbReference type="SMART" id="SM00320">
    <property type="entry name" value="WD40"/>
    <property type="match status" value="6"/>
</dbReference>
<dbReference type="SUPFAM" id="SSF50998">
    <property type="entry name" value="Quinoprotein alcohol dehydrogenase-like"/>
    <property type="match status" value="1"/>
</dbReference>
<dbReference type="SUPFAM" id="SSF50978">
    <property type="entry name" value="WD40 repeat-like"/>
    <property type="match status" value="1"/>
</dbReference>
<dbReference type="PROSITE" id="PS00678">
    <property type="entry name" value="WD_REPEATS_1"/>
    <property type="match status" value="3"/>
</dbReference>
<dbReference type="PROSITE" id="PS50082">
    <property type="entry name" value="WD_REPEATS_2"/>
    <property type="match status" value="4"/>
</dbReference>
<dbReference type="PROSITE" id="PS50294">
    <property type="entry name" value="WD_REPEATS_REGION"/>
    <property type="match status" value="3"/>
</dbReference>
<keyword id="KW-0025">Alternative splicing</keyword>
<keyword id="KW-0597">Phosphoprotein</keyword>
<keyword id="KW-1185">Reference proteome</keyword>
<keyword id="KW-0677">Repeat</keyword>
<keyword id="KW-0853">WD repeat</keyword>
<sequence>MAGNSLVLPIVLWGRKAPTHCISSILLTDDGGTIVTGCHDGQICLWDLSEELEVNPRALLFGHTAAITCLSKACASGDKQYTVSASANGEMCLWDVNDGRCIEFTKLACTHTGIQFYQFSVGNQREGRLLCHGHYPEILVVDATSLEVLYSLVSKISPDWISSMSIIRSHRTQEDTVVALSVTGILKVWIVTSEISGLQDTEPIFEEESKPIYCQNCQSLSFCAFTQRSLLVVCSKYWRVFDAGDYSLLCSGPSEDGQTWTGGDFVSADKVIIWTENGQSYIYKLPASCLPASDSFRSDVGKAVENLIPPVQHSLLDQKDRELVICPPVTRFFYGCKEYLHKLLIQGDSSGRLSIWNIADIADKQEANEGLKTTTCISLQDAFDKLKPCPAGIIDQLSVIPNSNEPLKVTASVYIPAHGRLVCGREDGSIIIVPATQTAIVQLLQGEHMLRRGWPPHRTLRGHRNKVTCLLYPHQVSARYDQRYLISGGVDFSVIIWDIFSGEMKHIFCVHGGEITQLLVPPENCSARVQHCVCSVASDHSVGLLSLREKKCIMLASRHLFPIQVIKWRPSDDYLVVGCTDGSVCVWQMDTGALDRCAMGITAVEILNACDEAVPAAVDSLSHPAVNLKQAMTRRSLAALKNMAHHKLQTLATNLLASEASDKGNLPKYSHNSLMVQAIKTNLTDPDIHVLFFDVEALIIQLLTEEASRPNTALISPENLQKASGSSDKGGSFLTGKRAAVLFQQVKETIKENIKEHLLDEEEDEEEVMRQRREESDPEYRASKSKPLTLLEYNLTMDTAKLFMSCLHAWGLNEVLDEVCLDRLGMLKPHCTVSFGLLSRGGHMSLMLPGYNQAAGKLLQAKAEAGRKGPATESVGKGTYTVSRAVTTQHLLSIISLANTLMSMTNATFIGDHMKKGPTRPPRPGTPDLSKARDSPPASSNIVQGQIKQAAAPVSARSAADHSGSASASPALRTCFLVNEGWSQLAAMHCVMLPDLLGLGKFRPPLLEMLARRWQDRCLEVREAAQALLLAELRRIEQAGRKETIDTWAPYLPQYMDHVISPGVTAEAMQTMAAAPDASGPEAKVQEEEHDLVDDDITTGCLSSVPQMKKMSTSYEERRKQATAIVLLGVIGAEFGAEIEPPKLLTRPRSSSQIPEGFGLTSGGSNYSLARHTCKALTFLLLQPPSPKLPPHSTIRRTAIDLIGRGFTVWEPYMDVSAVLMGLLELCADAEKQLANITMGLPLSPAADSARSARHALSLIATARPPAFITTIAKEVHRHTALAANTQSQQSIHTTTLARAKGEILRVIEILIEKMPTDVVDLLVEVMDIIMYCLEGSLVKKKGLQECFPAICRFYMVSYYERSHRIAVGARHGSVALYDIRTGKCQTIHGHKGPITAVSFAPDGRYLATYSNTDSHISFWQMNTSLLGSIGMLNSAPQLRCIKTYQVPPVQPASPGSHNALRLARLIWTSNRNVILMAHDGKEHRFMV</sequence>
<evidence type="ECO:0000250" key="1">
    <source>
        <dbReference type="UniProtKB" id="Q9Y4E6"/>
    </source>
</evidence>
<evidence type="ECO:0000256" key="2">
    <source>
        <dbReference type="SAM" id="MobiDB-lite"/>
    </source>
</evidence>
<evidence type="ECO:0000303" key="3">
    <source ref="1"/>
</evidence>
<organism>
    <name type="scientific">Rattus norvegicus</name>
    <name type="common">Rat</name>
    <dbReference type="NCBI Taxonomy" id="10116"/>
    <lineage>
        <taxon>Eukaryota</taxon>
        <taxon>Metazoa</taxon>
        <taxon>Chordata</taxon>
        <taxon>Craniata</taxon>
        <taxon>Vertebrata</taxon>
        <taxon>Euteleostomi</taxon>
        <taxon>Mammalia</taxon>
        <taxon>Eutheria</taxon>
        <taxon>Euarchontoglires</taxon>
        <taxon>Glires</taxon>
        <taxon>Rodentia</taxon>
        <taxon>Myomorpha</taxon>
        <taxon>Muroidea</taxon>
        <taxon>Muridae</taxon>
        <taxon>Murinae</taxon>
        <taxon>Rattus</taxon>
    </lineage>
</organism>